<reference key="1">
    <citation type="journal article" date="2002" name="Mol. Biol. Evol.">
        <title>The plastid chromosome of Atropa belladonna and its comparison with that of Nicotiana tabacum: the role of RNA editing in generating divergence in the process of plant speciation.</title>
        <authorList>
            <person name="Schmitz-Linneweber C."/>
            <person name="Regel R."/>
            <person name="Du T.G."/>
            <person name="Hupfer H."/>
            <person name="Herrmann R.G."/>
            <person name="Maier R.M."/>
        </authorList>
    </citation>
    <scope>NUCLEOTIDE SEQUENCE [LARGE SCALE GENOMIC DNA]</scope>
    <source>
        <strain>cv. Ab5p(kan)</strain>
    </source>
</reference>
<organism>
    <name type="scientific">Atropa belladonna</name>
    <name type="common">Belladonna</name>
    <name type="synonym">Deadly nightshade</name>
    <dbReference type="NCBI Taxonomy" id="33113"/>
    <lineage>
        <taxon>Eukaryota</taxon>
        <taxon>Viridiplantae</taxon>
        <taxon>Streptophyta</taxon>
        <taxon>Embryophyta</taxon>
        <taxon>Tracheophyta</taxon>
        <taxon>Spermatophyta</taxon>
        <taxon>Magnoliopsida</taxon>
        <taxon>eudicotyledons</taxon>
        <taxon>Gunneridae</taxon>
        <taxon>Pentapetalae</taxon>
        <taxon>asterids</taxon>
        <taxon>lamiids</taxon>
        <taxon>Solanales</taxon>
        <taxon>Solanaceae</taxon>
        <taxon>Solanoideae</taxon>
        <taxon>Hyoscyameae</taxon>
        <taxon>Atropa</taxon>
    </lineage>
</organism>
<dbReference type="EC" id="2.1.3.15" evidence="2"/>
<dbReference type="EMBL" id="AJ316582">
    <property type="protein sequence ID" value="CAC88053.1"/>
    <property type="status" value="ALT_INIT"/>
    <property type="molecule type" value="Genomic_DNA"/>
</dbReference>
<dbReference type="RefSeq" id="NP_783241.1">
    <property type="nucleotide sequence ID" value="NC_004561.1"/>
</dbReference>
<dbReference type="SMR" id="Q8S8W7"/>
<dbReference type="GeneID" id="806522"/>
<dbReference type="UniPathway" id="UPA00655">
    <property type="reaction ID" value="UER00711"/>
</dbReference>
<dbReference type="GO" id="GO:0009317">
    <property type="term" value="C:acetyl-CoA carboxylase complex"/>
    <property type="evidence" value="ECO:0007669"/>
    <property type="project" value="InterPro"/>
</dbReference>
<dbReference type="GO" id="GO:0009570">
    <property type="term" value="C:chloroplast stroma"/>
    <property type="evidence" value="ECO:0007669"/>
    <property type="project" value="UniProtKB-SubCell"/>
</dbReference>
<dbReference type="GO" id="GO:0003989">
    <property type="term" value="F:acetyl-CoA carboxylase activity"/>
    <property type="evidence" value="ECO:0007669"/>
    <property type="project" value="InterPro"/>
</dbReference>
<dbReference type="GO" id="GO:0005524">
    <property type="term" value="F:ATP binding"/>
    <property type="evidence" value="ECO:0007669"/>
    <property type="project" value="UniProtKB-KW"/>
</dbReference>
<dbReference type="GO" id="GO:0016743">
    <property type="term" value="F:carboxyl- or carbamoyltransferase activity"/>
    <property type="evidence" value="ECO:0007669"/>
    <property type="project" value="UniProtKB-UniRule"/>
</dbReference>
<dbReference type="GO" id="GO:0008270">
    <property type="term" value="F:zinc ion binding"/>
    <property type="evidence" value="ECO:0007669"/>
    <property type="project" value="UniProtKB-UniRule"/>
</dbReference>
<dbReference type="GO" id="GO:0006633">
    <property type="term" value="P:fatty acid biosynthetic process"/>
    <property type="evidence" value="ECO:0007669"/>
    <property type="project" value="UniProtKB-KW"/>
</dbReference>
<dbReference type="GO" id="GO:2001295">
    <property type="term" value="P:malonyl-CoA biosynthetic process"/>
    <property type="evidence" value="ECO:0007669"/>
    <property type="project" value="UniProtKB-UniRule"/>
</dbReference>
<dbReference type="Gene3D" id="3.90.226.10">
    <property type="entry name" value="2-enoyl-CoA Hydratase, Chain A, domain 1"/>
    <property type="match status" value="1"/>
</dbReference>
<dbReference type="HAMAP" id="MF_01395">
    <property type="entry name" value="AcetylCoA_CT_beta"/>
    <property type="match status" value="1"/>
</dbReference>
<dbReference type="InterPro" id="IPR034733">
    <property type="entry name" value="AcCoA_carboxyl_beta"/>
</dbReference>
<dbReference type="InterPro" id="IPR000438">
    <property type="entry name" value="Acetyl_CoA_COase_Trfase_b_su"/>
</dbReference>
<dbReference type="InterPro" id="IPR029045">
    <property type="entry name" value="ClpP/crotonase-like_dom_sf"/>
</dbReference>
<dbReference type="InterPro" id="IPR011762">
    <property type="entry name" value="COA_CT_N"/>
</dbReference>
<dbReference type="NCBIfam" id="TIGR00515">
    <property type="entry name" value="accD"/>
    <property type="match status" value="1"/>
</dbReference>
<dbReference type="PANTHER" id="PTHR42995">
    <property type="entry name" value="ACETYL-COENZYME A CARBOXYLASE CARBOXYL TRANSFERASE SUBUNIT BETA, CHLOROPLASTIC"/>
    <property type="match status" value="1"/>
</dbReference>
<dbReference type="PANTHER" id="PTHR42995:SF5">
    <property type="entry name" value="ACETYL-COENZYME A CARBOXYLASE CARBOXYL TRANSFERASE SUBUNIT BETA, CHLOROPLASTIC"/>
    <property type="match status" value="1"/>
</dbReference>
<dbReference type="Pfam" id="PF01039">
    <property type="entry name" value="Carboxyl_trans"/>
    <property type="match status" value="1"/>
</dbReference>
<dbReference type="PRINTS" id="PR01070">
    <property type="entry name" value="ACCCTRFRASEB"/>
</dbReference>
<dbReference type="SUPFAM" id="SSF52096">
    <property type="entry name" value="ClpP/crotonase"/>
    <property type="match status" value="1"/>
</dbReference>
<dbReference type="PROSITE" id="PS50980">
    <property type="entry name" value="COA_CT_NTER"/>
    <property type="match status" value="1"/>
</dbReference>
<feature type="chain" id="PRO_0000359122" description="Acetyl-coenzyme A carboxylase carboxyl transferase subunit beta, chloroplastic">
    <location>
        <begin position="1"/>
        <end position="487"/>
    </location>
</feature>
<feature type="domain" description="CoA carboxyltransferase N-terminal" evidence="3">
    <location>
        <begin position="218"/>
        <end position="487"/>
    </location>
</feature>
<feature type="zinc finger region" description="C4-type" evidence="2">
    <location>
        <begin position="222"/>
        <end position="244"/>
    </location>
</feature>
<feature type="region of interest" description="Disordered" evidence="4">
    <location>
        <begin position="180"/>
        <end position="201"/>
    </location>
</feature>
<feature type="binding site" evidence="2">
    <location>
        <position position="222"/>
    </location>
    <ligand>
        <name>Zn(2+)</name>
        <dbReference type="ChEBI" id="CHEBI:29105"/>
    </ligand>
</feature>
<feature type="binding site" evidence="2">
    <location>
        <position position="225"/>
    </location>
    <ligand>
        <name>Zn(2+)</name>
        <dbReference type="ChEBI" id="CHEBI:29105"/>
    </ligand>
</feature>
<feature type="binding site" evidence="2">
    <location>
        <position position="241"/>
    </location>
    <ligand>
        <name>Zn(2+)</name>
        <dbReference type="ChEBI" id="CHEBI:29105"/>
    </ligand>
</feature>
<feature type="binding site" evidence="2">
    <location>
        <position position="244"/>
    </location>
    <ligand>
        <name>Zn(2+)</name>
        <dbReference type="ChEBI" id="CHEBI:29105"/>
    </ligand>
</feature>
<sequence length="487" mass="55343">MERWWFNSMLFKKEFERRCGLNKSMGSLGPIENTSEDPNRKVKNIHSCSNVDYLFGVKDIRNFISDDTFLVSDRNGDSYSIYFDIENQIFEIDNDHSFLSELESSFYSYRNSSYLNNGFRGEDPYYNSYMYDTQYSWNNHINSCIDNYLQSQICIDTSIISGSENYGDSYIYRTICGGESRNSSENEGSSKRTRTKGSDLTIRESSNDLEVTQKYRHLWVQCENCYGLNYKKFLKSKMNICEQCGYHLKMSSSDRIELLIDAGTWDPMDEDMVSLDPIEFHSEEEPYKDRIDSYQRKTGLTEAVQTGIGQLNGIPVAIGVMDFQFMGGSMGSVVGEKITRLIEHAANQILPLIIVCASGGARMQEGSLSLMQMAKISSALYDYQLNKKLFYVSILTSPTTGGVTASFGMLGDIIIAEPNAYIAFAGKRVIEQTLNKTVPEGSQAAEYLFQKGLFDQIVPRNLLKSVLSELFKLHAFFPLNQKSSKIK</sequence>
<geneLocation type="chloroplast"/>
<protein>
    <recommendedName>
        <fullName evidence="2">Acetyl-coenzyme A carboxylase carboxyl transferase subunit beta, chloroplastic</fullName>
        <shortName evidence="2">ACCase subunit beta</shortName>
        <shortName evidence="2">Acetyl-CoA carboxylase carboxyltransferase subunit beta</shortName>
        <ecNumber evidence="2">2.1.3.15</ecNumber>
    </recommendedName>
</protein>
<proteinExistence type="inferred from homology"/>
<accession>Q8S8W7</accession>
<name>ACCD_ATRBE</name>
<keyword id="KW-0067">ATP-binding</keyword>
<keyword id="KW-0150">Chloroplast</keyword>
<keyword id="KW-0275">Fatty acid biosynthesis</keyword>
<keyword id="KW-0276">Fatty acid metabolism</keyword>
<keyword id="KW-0444">Lipid biosynthesis</keyword>
<keyword id="KW-0443">Lipid metabolism</keyword>
<keyword id="KW-0479">Metal-binding</keyword>
<keyword id="KW-0547">Nucleotide-binding</keyword>
<keyword id="KW-0934">Plastid</keyword>
<keyword id="KW-0808">Transferase</keyword>
<keyword id="KW-0862">Zinc</keyword>
<keyword id="KW-0863">Zinc-finger</keyword>
<gene>
    <name evidence="2" type="primary">accD</name>
</gene>
<evidence type="ECO:0000250" key="1"/>
<evidence type="ECO:0000255" key="2">
    <source>
        <dbReference type="HAMAP-Rule" id="MF_01395"/>
    </source>
</evidence>
<evidence type="ECO:0000255" key="3">
    <source>
        <dbReference type="PROSITE-ProRule" id="PRU01136"/>
    </source>
</evidence>
<evidence type="ECO:0000256" key="4">
    <source>
        <dbReference type="SAM" id="MobiDB-lite"/>
    </source>
</evidence>
<evidence type="ECO:0000305" key="5"/>
<comment type="function">
    <text evidence="2">Component of the acetyl coenzyme A carboxylase (ACC) complex. Biotin carboxylase (BC) catalyzes the carboxylation of biotin on its carrier protein (BCCP) and then the CO(2) group is transferred by the transcarboxylase to acetyl-CoA to form malonyl-CoA.</text>
</comment>
<comment type="catalytic activity">
    <reaction evidence="2">
        <text>N(6)-carboxybiotinyl-L-lysyl-[protein] + acetyl-CoA = N(6)-biotinyl-L-lysyl-[protein] + malonyl-CoA</text>
        <dbReference type="Rhea" id="RHEA:54728"/>
        <dbReference type="Rhea" id="RHEA-COMP:10505"/>
        <dbReference type="Rhea" id="RHEA-COMP:10506"/>
        <dbReference type="ChEBI" id="CHEBI:57288"/>
        <dbReference type="ChEBI" id="CHEBI:57384"/>
        <dbReference type="ChEBI" id="CHEBI:83144"/>
        <dbReference type="ChEBI" id="CHEBI:83145"/>
        <dbReference type="EC" id="2.1.3.15"/>
    </reaction>
</comment>
<comment type="cofactor">
    <cofactor evidence="2">
        <name>Zn(2+)</name>
        <dbReference type="ChEBI" id="CHEBI:29105"/>
    </cofactor>
    <text evidence="2">Binds 1 zinc ion per subunit.</text>
</comment>
<comment type="pathway">
    <text evidence="2">Lipid metabolism; malonyl-CoA biosynthesis; malonyl-CoA from acetyl-CoA: step 1/1.</text>
</comment>
<comment type="subunit">
    <text evidence="1">Acetyl-CoA carboxylase is a heterohexamer composed of biotin carboxyl carrier protein, biotin carboxylase and 2 subunits each of ACCase subunit alpha and ACCase plastid-coded subunit beta (accD).</text>
</comment>
<comment type="subcellular location">
    <subcellularLocation>
        <location evidence="2">Plastid</location>
        <location evidence="2">Chloroplast stroma</location>
    </subcellularLocation>
</comment>
<comment type="similarity">
    <text evidence="2">Belongs to the AccD/PCCB family.</text>
</comment>
<comment type="sequence caution" evidence="5">
    <conflict type="erroneous initiation">
        <sequence resource="EMBL-CDS" id="CAC88053"/>
    </conflict>
    <text>Extended N-terminus.</text>
</comment>